<comment type="function">
    <text evidence="2">Glutamine synthetase (GS) is an unusual multitasking protein that functions as an enzyme, a transcription coregulator, and a chaperone in ammonium assimilation and in the regulation of genes involved in nitrogen metabolism. It catalyzes the ATP-dependent biosynthesis of glutamine from glutamate and ammonia. Feedback-inhibited GlnA also interacts with and regulates the activity of the transcriptional regulator TnrA. During nitrogen limitation, TnrA is in its DNA-binding active state and turns on the transcription of genes required for nitrogen assimilation. Under conditions of nitrogen excess, feedback-inhibited GlnA forms a stable complex with TnrA, which inhibits its DNA-binding activity. In contrast, feedback-inhibited GlnA acts as a chaperone to stabilize the DNA-binding activity of GlnR, which represses the transcription of nitrogen assimilation genes.</text>
</comment>
<comment type="catalytic activity">
    <reaction evidence="2">
        <text>L-glutamate + NH4(+) + ATP = L-glutamine + ADP + phosphate + H(+)</text>
        <dbReference type="Rhea" id="RHEA:16169"/>
        <dbReference type="ChEBI" id="CHEBI:15378"/>
        <dbReference type="ChEBI" id="CHEBI:28938"/>
        <dbReference type="ChEBI" id="CHEBI:29985"/>
        <dbReference type="ChEBI" id="CHEBI:30616"/>
        <dbReference type="ChEBI" id="CHEBI:43474"/>
        <dbReference type="ChEBI" id="CHEBI:58359"/>
        <dbReference type="ChEBI" id="CHEBI:456216"/>
        <dbReference type="EC" id="6.3.1.2"/>
    </reaction>
</comment>
<comment type="cofactor">
    <cofactor evidence="2">
        <name>Mg(2+)</name>
        <dbReference type="ChEBI" id="CHEBI:18420"/>
    </cofactor>
    <text evidence="2">Binds 2 Mg(2+) ions per subunit.</text>
</comment>
<comment type="activity regulation">
    <text evidence="2">Inhibited by glutamine.</text>
</comment>
<comment type="subunit">
    <text evidence="2">Oligomer of 12 subunits arranged in the form of two hexagons. In its feedback-inhibited form, interacts with TnrA in order to block its DNA-binding activity.</text>
</comment>
<comment type="subcellular location">
    <subcellularLocation>
        <location evidence="2">Cytoplasm</location>
    </subcellularLocation>
</comment>
<comment type="similarity">
    <text evidence="7">Belongs to the glutamine synthetase family.</text>
</comment>
<dbReference type="EC" id="6.3.1.2" evidence="2"/>
<dbReference type="EMBL" id="BA000017">
    <property type="protein sequence ID" value="BAB57472.1"/>
    <property type="molecule type" value="Genomic_DNA"/>
</dbReference>
<dbReference type="RefSeq" id="WP_001126606.1">
    <property type="nucleotide sequence ID" value="NC_002758.2"/>
</dbReference>
<dbReference type="SMR" id="P60890"/>
<dbReference type="KEGG" id="sav:SAV1310"/>
<dbReference type="HOGENOM" id="CLU_017290_1_3_9"/>
<dbReference type="PhylomeDB" id="P60890"/>
<dbReference type="Proteomes" id="UP000002481">
    <property type="component" value="Chromosome"/>
</dbReference>
<dbReference type="GO" id="GO:0005737">
    <property type="term" value="C:cytoplasm"/>
    <property type="evidence" value="ECO:0007669"/>
    <property type="project" value="UniProtKB-SubCell"/>
</dbReference>
<dbReference type="GO" id="GO:0005524">
    <property type="term" value="F:ATP binding"/>
    <property type="evidence" value="ECO:0007669"/>
    <property type="project" value="UniProtKB-KW"/>
</dbReference>
<dbReference type="GO" id="GO:0004356">
    <property type="term" value="F:glutamine synthetase activity"/>
    <property type="evidence" value="ECO:0007669"/>
    <property type="project" value="UniProtKB-EC"/>
</dbReference>
<dbReference type="GO" id="GO:0046872">
    <property type="term" value="F:metal ion binding"/>
    <property type="evidence" value="ECO:0007669"/>
    <property type="project" value="UniProtKB-KW"/>
</dbReference>
<dbReference type="GO" id="GO:0006542">
    <property type="term" value="P:glutamine biosynthetic process"/>
    <property type="evidence" value="ECO:0007669"/>
    <property type="project" value="InterPro"/>
</dbReference>
<dbReference type="FunFam" id="3.10.20.70:FF:000005">
    <property type="entry name" value="Glutamine synthetase"/>
    <property type="match status" value="1"/>
</dbReference>
<dbReference type="FunFam" id="3.30.590.10:FF:000003">
    <property type="entry name" value="Glutamine synthetase 2"/>
    <property type="match status" value="1"/>
</dbReference>
<dbReference type="Gene3D" id="3.10.20.70">
    <property type="entry name" value="Glutamine synthetase, N-terminal domain"/>
    <property type="match status" value="1"/>
</dbReference>
<dbReference type="Gene3D" id="3.30.590.10">
    <property type="entry name" value="Glutamine synthetase/guanido kinase, catalytic domain"/>
    <property type="match status" value="1"/>
</dbReference>
<dbReference type="InterPro" id="IPR008147">
    <property type="entry name" value="Gln_synt_N"/>
</dbReference>
<dbReference type="InterPro" id="IPR036651">
    <property type="entry name" value="Gln_synt_N_sf"/>
</dbReference>
<dbReference type="InterPro" id="IPR014746">
    <property type="entry name" value="Gln_synth/guanido_kin_cat_dom"/>
</dbReference>
<dbReference type="InterPro" id="IPR008146">
    <property type="entry name" value="Gln_synth_cat_dom"/>
</dbReference>
<dbReference type="InterPro" id="IPR027303">
    <property type="entry name" value="Gln_synth_gly_rich_site"/>
</dbReference>
<dbReference type="InterPro" id="IPR004809">
    <property type="entry name" value="Gln_synth_I"/>
</dbReference>
<dbReference type="InterPro" id="IPR027302">
    <property type="entry name" value="Gln_synth_N_conserv_site"/>
</dbReference>
<dbReference type="NCBIfam" id="TIGR00653">
    <property type="entry name" value="GlnA"/>
    <property type="match status" value="1"/>
</dbReference>
<dbReference type="PANTHER" id="PTHR43785">
    <property type="entry name" value="GAMMA-GLUTAMYLPUTRESCINE SYNTHETASE"/>
    <property type="match status" value="1"/>
</dbReference>
<dbReference type="PANTHER" id="PTHR43785:SF12">
    <property type="entry name" value="TYPE-1 GLUTAMINE SYNTHETASE 2"/>
    <property type="match status" value="1"/>
</dbReference>
<dbReference type="Pfam" id="PF00120">
    <property type="entry name" value="Gln-synt_C"/>
    <property type="match status" value="1"/>
</dbReference>
<dbReference type="Pfam" id="PF03951">
    <property type="entry name" value="Gln-synt_N"/>
    <property type="match status" value="1"/>
</dbReference>
<dbReference type="SMART" id="SM01230">
    <property type="entry name" value="Gln-synt_C"/>
    <property type="match status" value="1"/>
</dbReference>
<dbReference type="SUPFAM" id="SSF54368">
    <property type="entry name" value="Glutamine synthetase, N-terminal domain"/>
    <property type="match status" value="1"/>
</dbReference>
<dbReference type="SUPFAM" id="SSF55931">
    <property type="entry name" value="Glutamine synthetase/guanido kinase"/>
    <property type="match status" value="1"/>
</dbReference>
<dbReference type="PROSITE" id="PS00180">
    <property type="entry name" value="GLNA_1"/>
    <property type="match status" value="1"/>
</dbReference>
<dbReference type="PROSITE" id="PS00181">
    <property type="entry name" value="GLNA_ATP"/>
    <property type="match status" value="1"/>
</dbReference>
<dbReference type="PROSITE" id="PS51986">
    <property type="entry name" value="GS_BETA_GRASP"/>
    <property type="match status" value="1"/>
</dbReference>
<dbReference type="PROSITE" id="PS51987">
    <property type="entry name" value="GS_CATALYTIC"/>
    <property type="match status" value="1"/>
</dbReference>
<name>GLN1A_STAAM</name>
<sequence length="446" mass="50855">MPKRTFTKEDIRKFAEEENVRYLRLQFTDILGTIKNVEVPVSQLEKVLDNEMMFDGSSIEGFVRIEESDMYLHPDLDTWVIFPWTAGQGKVARLICDVYKTDGTPFEGDPRANLKRVLKEMEDLGFTDFNLGPEPEFFLFKLDEKGEPTLELNDDGGYFDLAPTDLGENCRRDIVLELEDMGFDIEASHHEVAPGQHEIDFKYADAVTACDNIQTFKLVVKTIARKHNLHATFMPKPLFGVNGSGMHFNVSLFKGKENAFFDPNTEMGLTETAYQFTAGVLKNARGFTAVCNPLVNSYKRLVPGYEAPCYIAWSGKNRSPLIRVPSSRGLSTRIEVRSVDPAANPYMALAAILEAGLDGIKNKLKVPEPVNQNIYEMNREEREAVGIQDLPSTLYTALKAMRENEVIKKALGNHIYNQFINSKSIEWDYYRTQVSEWERDQYMKQY</sequence>
<reference key="1">
    <citation type="journal article" date="2001" name="Lancet">
        <title>Whole genome sequencing of meticillin-resistant Staphylococcus aureus.</title>
        <authorList>
            <person name="Kuroda M."/>
            <person name="Ohta T."/>
            <person name="Uchiyama I."/>
            <person name="Baba T."/>
            <person name="Yuzawa H."/>
            <person name="Kobayashi I."/>
            <person name="Cui L."/>
            <person name="Oguchi A."/>
            <person name="Aoki K."/>
            <person name="Nagai Y."/>
            <person name="Lian J.-Q."/>
            <person name="Ito T."/>
            <person name="Kanamori M."/>
            <person name="Matsumaru H."/>
            <person name="Maruyama A."/>
            <person name="Murakami H."/>
            <person name="Hosoyama A."/>
            <person name="Mizutani-Ui Y."/>
            <person name="Takahashi N.K."/>
            <person name="Sawano T."/>
            <person name="Inoue R."/>
            <person name="Kaito C."/>
            <person name="Sekimizu K."/>
            <person name="Hirakawa H."/>
            <person name="Kuhara S."/>
            <person name="Goto S."/>
            <person name="Yabuzaki J."/>
            <person name="Kanehisa M."/>
            <person name="Yamashita A."/>
            <person name="Oshima K."/>
            <person name="Furuya K."/>
            <person name="Yoshino C."/>
            <person name="Shiba T."/>
            <person name="Hattori M."/>
            <person name="Ogasawara N."/>
            <person name="Hayashi H."/>
            <person name="Hiramatsu K."/>
        </authorList>
    </citation>
    <scope>NUCLEOTIDE SEQUENCE [LARGE SCALE GENOMIC DNA]</scope>
    <source>
        <strain>Mu50 / ATCC 700699</strain>
    </source>
</reference>
<accession>P60890</accession>
<accession>Q99UG5</accession>
<feature type="chain" id="PRO_0000153258" description="Glutamine synthetase">
    <location>
        <begin position="1"/>
        <end position="446"/>
    </location>
</feature>
<feature type="domain" description="GS beta-grasp" evidence="5">
    <location>
        <begin position="18"/>
        <end position="103"/>
    </location>
</feature>
<feature type="domain" description="GS catalytic" evidence="6">
    <location>
        <begin position="110"/>
        <end position="446"/>
    </location>
</feature>
<feature type="binding site" evidence="2">
    <location>
        <position position="134"/>
    </location>
    <ligand>
        <name>Mg(2+)</name>
        <dbReference type="ChEBI" id="CHEBI:18420"/>
        <label>1</label>
    </ligand>
</feature>
<feature type="binding site" evidence="2">
    <location>
        <position position="136"/>
    </location>
    <ligand>
        <name>Mg(2+)</name>
        <dbReference type="ChEBI" id="CHEBI:18420"/>
        <label>2</label>
    </ligand>
</feature>
<feature type="binding site" evidence="4">
    <location>
        <position position="186"/>
    </location>
    <ligand>
        <name>ATP</name>
        <dbReference type="ChEBI" id="CHEBI:30616"/>
    </ligand>
</feature>
<feature type="binding site" evidence="2">
    <location>
        <position position="191"/>
    </location>
    <ligand>
        <name>Mg(2+)</name>
        <dbReference type="ChEBI" id="CHEBI:18420"/>
        <label>2</label>
    </ligand>
</feature>
<feature type="binding site" evidence="2">
    <location>
        <position position="198"/>
    </location>
    <ligand>
        <name>Mg(2+)</name>
        <dbReference type="ChEBI" id="CHEBI:18420"/>
        <label>2</label>
    </ligand>
</feature>
<feature type="binding site" evidence="4">
    <location>
        <begin position="242"/>
        <end position="243"/>
    </location>
    <ligand>
        <name>L-glutamate</name>
        <dbReference type="ChEBI" id="CHEBI:29985"/>
    </ligand>
</feature>
<feature type="binding site" evidence="2">
    <location>
        <position position="243"/>
    </location>
    <ligand>
        <name>L-glutamate</name>
        <dbReference type="ChEBI" id="CHEBI:29985"/>
    </ligand>
</feature>
<feature type="binding site" evidence="2">
    <location>
        <position position="247"/>
    </location>
    <ligand>
        <name>Mg(2+)</name>
        <dbReference type="ChEBI" id="CHEBI:18420"/>
        <label>1</label>
    </ligand>
</feature>
<feature type="binding site" evidence="3">
    <location>
        <position position="251"/>
    </location>
    <ligand>
        <name>ATP</name>
        <dbReference type="ChEBI" id="CHEBI:30616"/>
    </ligand>
</feature>
<feature type="binding site" evidence="1">
    <location>
        <position position="300"/>
    </location>
    <ligand>
        <name>L-glutamate</name>
        <dbReference type="ChEBI" id="CHEBI:29985"/>
    </ligand>
</feature>
<feature type="binding site" evidence="1">
    <location>
        <position position="306"/>
    </location>
    <ligand>
        <name>L-glutamate</name>
        <dbReference type="ChEBI" id="CHEBI:29985"/>
    </ligand>
</feature>
<feature type="binding site" evidence="4">
    <location>
        <position position="318"/>
    </location>
    <ligand>
        <name>ATP</name>
        <dbReference type="ChEBI" id="CHEBI:30616"/>
    </ligand>
</feature>
<feature type="binding site" evidence="4">
    <location>
        <position position="318"/>
    </location>
    <ligand>
        <name>L-glutamate</name>
        <dbReference type="ChEBI" id="CHEBI:29985"/>
    </ligand>
</feature>
<feature type="binding site" evidence="4">
    <location>
        <position position="323"/>
    </location>
    <ligand>
        <name>ATP</name>
        <dbReference type="ChEBI" id="CHEBI:30616"/>
    </ligand>
</feature>
<feature type="binding site" evidence="2">
    <location>
        <position position="335"/>
    </location>
    <ligand>
        <name>Mg(2+)</name>
        <dbReference type="ChEBI" id="CHEBI:18420"/>
        <label>1</label>
    </ligand>
</feature>
<feature type="binding site" evidence="1">
    <location>
        <position position="337"/>
    </location>
    <ligand>
        <name>L-glutamate</name>
        <dbReference type="ChEBI" id="CHEBI:29985"/>
    </ligand>
</feature>
<feature type="site" description="Important for inhibition by glutamine" evidence="2">
    <location>
        <position position="64"/>
    </location>
</feature>
<protein>
    <recommendedName>
        <fullName evidence="2">Glutamine synthetase</fullName>
        <shortName evidence="2">GS</shortName>
        <ecNumber evidence="2">6.3.1.2</ecNumber>
    </recommendedName>
    <alternativeName>
        <fullName evidence="2">Glutamate--ammonia ligase</fullName>
    </alternativeName>
    <alternativeName>
        <fullName evidence="2">Glutamine synthetase I alpha</fullName>
        <shortName evidence="2">GSI alpha</shortName>
    </alternativeName>
</protein>
<gene>
    <name evidence="2" type="primary">glnA</name>
    <name type="ordered locus">SAV1310</name>
</gene>
<proteinExistence type="inferred from homology"/>
<keyword id="KW-0067">ATP-binding</keyword>
<keyword id="KW-0963">Cytoplasm</keyword>
<keyword id="KW-0436">Ligase</keyword>
<keyword id="KW-0460">Magnesium</keyword>
<keyword id="KW-0479">Metal-binding</keyword>
<keyword id="KW-0547">Nucleotide-binding</keyword>
<evidence type="ECO:0000250" key="1">
    <source>
        <dbReference type="UniProtKB" id="P0A1P6"/>
    </source>
</evidence>
<evidence type="ECO:0000250" key="2">
    <source>
        <dbReference type="UniProtKB" id="P12425"/>
    </source>
</evidence>
<evidence type="ECO:0000250" key="3">
    <source>
        <dbReference type="UniProtKB" id="P77961"/>
    </source>
</evidence>
<evidence type="ECO:0000250" key="4">
    <source>
        <dbReference type="UniProtKB" id="P9WN39"/>
    </source>
</evidence>
<evidence type="ECO:0000255" key="5">
    <source>
        <dbReference type="PROSITE-ProRule" id="PRU01330"/>
    </source>
</evidence>
<evidence type="ECO:0000255" key="6">
    <source>
        <dbReference type="PROSITE-ProRule" id="PRU01331"/>
    </source>
</evidence>
<evidence type="ECO:0000305" key="7"/>
<organism>
    <name type="scientific">Staphylococcus aureus (strain Mu50 / ATCC 700699)</name>
    <dbReference type="NCBI Taxonomy" id="158878"/>
    <lineage>
        <taxon>Bacteria</taxon>
        <taxon>Bacillati</taxon>
        <taxon>Bacillota</taxon>
        <taxon>Bacilli</taxon>
        <taxon>Bacillales</taxon>
        <taxon>Staphylococcaceae</taxon>
        <taxon>Staphylococcus</taxon>
    </lineage>
</organism>